<keyword id="KW-0472">Membrane</keyword>
<keyword id="KW-0496">Mitochondrion</keyword>
<keyword id="KW-0999">Mitochondrion inner membrane</keyword>
<keyword id="KW-1267">Proteomics identification</keyword>
<keyword id="KW-1185">Reference proteome</keyword>
<keyword id="KW-0677">Repeat</keyword>
<keyword id="KW-0812">Transmembrane</keyword>
<keyword id="KW-1133">Transmembrane helix</keyword>
<keyword id="KW-0813">Transport</keyword>
<proteinExistence type="evidence at protein level"/>
<sequence>MVGFKATDVPPTATVKFLGAGTAACIADLITFPLDTAKVRLQIQGESQGPVRATASAQYRGVMGTILTMVRTEGPRSLYNGLVAGLQRQMSFASVRIGLYDSVKQFYTKGSEHASIGSRLLAGSTTGALAVAVAQPTDVVKVRFQAQARAGGGRRYQSTVNAYKTIAREEGFRGLWKGTSPNVARNAIVNCAELVTYDLIKDALLKANLMTDDLPCHFTSAFGAGFCTTVIASPVDVVKTRYMNSALGQYSSAGHCALTMLQKEGPRAFYKGFMPSFLRLGSWNVVMFVTYEQLKRALMAACTSREAPF</sequence>
<name>UCP2_HUMAN</name>
<dbReference type="EMBL" id="U82819">
    <property type="protein sequence ID" value="AAC51336.1"/>
    <property type="molecule type" value="mRNA"/>
</dbReference>
<dbReference type="EMBL" id="U76367">
    <property type="protein sequence ID" value="AAB48411.1"/>
    <property type="molecule type" value="mRNA"/>
</dbReference>
<dbReference type="EMBL" id="U94592">
    <property type="protein sequence ID" value="AAB53091.1"/>
    <property type="molecule type" value="mRNA"/>
</dbReference>
<dbReference type="EMBL" id="AJ223477">
    <property type="protein sequence ID" value="CAA11402.1"/>
    <property type="molecule type" value="Genomic_DNA"/>
</dbReference>
<dbReference type="EMBL" id="AJ223478">
    <property type="protein sequence ID" value="CAA11402.1"/>
    <property type="status" value="JOINED"/>
    <property type="molecule type" value="Genomic_DNA"/>
</dbReference>
<dbReference type="EMBL" id="AJ223479">
    <property type="protein sequence ID" value="CAA11402.1"/>
    <property type="status" value="JOINED"/>
    <property type="molecule type" value="Genomic_DNA"/>
</dbReference>
<dbReference type="EMBL" id="AF019409">
    <property type="protein sequence ID" value="AAC39690.1"/>
    <property type="molecule type" value="Genomic_DNA"/>
</dbReference>
<dbReference type="EMBL" id="AF096289">
    <property type="protein sequence ID" value="AAD21151.1"/>
    <property type="molecule type" value="Genomic_DNA"/>
</dbReference>
<dbReference type="EMBL" id="AK222540">
    <property type="protein sequence ID" value="BAD96260.1"/>
    <property type="molecule type" value="mRNA"/>
</dbReference>
<dbReference type="EMBL" id="AK222557">
    <property type="protein sequence ID" value="BAD96277.1"/>
    <property type="molecule type" value="mRNA"/>
</dbReference>
<dbReference type="EMBL" id="DQ087219">
    <property type="protein sequence ID" value="AAY68217.1"/>
    <property type="molecule type" value="Genomic_DNA"/>
</dbReference>
<dbReference type="EMBL" id="BC011737">
    <property type="protein sequence ID" value="AAH11737.1"/>
    <property type="molecule type" value="mRNA"/>
</dbReference>
<dbReference type="CCDS" id="CCDS8228.1"/>
<dbReference type="RefSeq" id="NP_001368872.1">
    <property type="nucleotide sequence ID" value="NM_001381943.1"/>
</dbReference>
<dbReference type="RefSeq" id="NP_001368873.1">
    <property type="nucleotide sequence ID" value="NM_001381944.1"/>
</dbReference>
<dbReference type="RefSeq" id="NP_001368874.1">
    <property type="nucleotide sequence ID" value="NM_001381945.1"/>
</dbReference>
<dbReference type="RefSeq" id="NP_001368876.1">
    <property type="nucleotide sequence ID" value="NM_001381947.1"/>
</dbReference>
<dbReference type="RefSeq" id="NP_001368877.1">
    <property type="nucleotide sequence ID" value="NM_001381948.1"/>
</dbReference>
<dbReference type="RefSeq" id="NP_003346.2">
    <property type="nucleotide sequence ID" value="NM_003355.2"/>
</dbReference>
<dbReference type="BioGRID" id="113198">
    <property type="interactions" value="25"/>
</dbReference>
<dbReference type="CORUM" id="P55851"/>
<dbReference type="FunCoup" id="P55851">
    <property type="interactions" value="517"/>
</dbReference>
<dbReference type="IntAct" id="P55851">
    <property type="interactions" value="17"/>
</dbReference>
<dbReference type="STRING" id="9606.ENSP00000499695"/>
<dbReference type="TCDB" id="2.A.29.3.4">
    <property type="family name" value="the mitochondrial carrier (mc) family"/>
</dbReference>
<dbReference type="iPTMnet" id="P55851"/>
<dbReference type="PhosphoSitePlus" id="P55851"/>
<dbReference type="BioMuta" id="UCP2"/>
<dbReference type="DMDM" id="2497981"/>
<dbReference type="jPOST" id="P55851"/>
<dbReference type="MassIVE" id="P55851"/>
<dbReference type="PaxDb" id="9606-ENSP00000312029"/>
<dbReference type="PeptideAtlas" id="P55851"/>
<dbReference type="ProteomicsDB" id="56873"/>
<dbReference type="Antibodypedia" id="31003">
    <property type="antibodies" value="404 antibodies from 39 providers"/>
</dbReference>
<dbReference type="DNASU" id="7351"/>
<dbReference type="Ensembl" id="ENST00000310473.10">
    <property type="protein sequence ID" value="ENSP00000312029.3"/>
    <property type="gene ID" value="ENSG00000175567.12"/>
</dbReference>
<dbReference type="Ensembl" id="ENST00000663595.2">
    <property type="protein sequence ID" value="ENSP00000499695.1"/>
    <property type="gene ID" value="ENSG00000175567.12"/>
</dbReference>
<dbReference type="GeneID" id="7351"/>
<dbReference type="KEGG" id="hsa:7351"/>
<dbReference type="MANE-Select" id="ENST00000663595.2">
    <property type="protein sequence ID" value="ENSP00000499695.1"/>
    <property type="RefSeq nucleotide sequence ID" value="NM_003355.3"/>
    <property type="RefSeq protein sequence ID" value="NP_003346.2"/>
</dbReference>
<dbReference type="UCSC" id="uc001oup.2">
    <property type="organism name" value="human"/>
</dbReference>
<dbReference type="AGR" id="HGNC:12518"/>
<dbReference type="CTD" id="7351"/>
<dbReference type="DisGeNET" id="7351"/>
<dbReference type="GeneCards" id="UCP2"/>
<dbReference type="HGNC" id="HGNC:12518">
    <property type="gene designation" value="UCP2"/>
</dbReference>
<dbReference type="HPA" id="ENSG00000175567">
    <property type="expression patterns" value="Tissue enhanced (lymphoid)"/>
</dbReference>
<dbReference type="MalaCards" id="UCP2"/>
<dbReference type="MIM" id="601693">
    <property type="type" value="gene"/>
</dbReference>
<dbReference type="MIM" id="607447">
    <property type="type" value="phenotype"/>
</dbReference>
<dbReference type="neXtProt" id="NX_P55851"/>
<dbReference type="OpenTargets" id="ENSG00000175567"/>
<dbReference type="Orphanet" id="276556">
    <property type="disease" value="Hyperinsulinism due to UCP2 deficiency"/>
</dbReference>
<dbReference type="PharmGKB" id="PA37165"/>
<dbReference type="VEuPathDB" id="HostDB:ENSG00000175567"/>
<dbReference type="eggNOG" id="KOG0753">
    <property type="taxonomic scope" value="Eukaryota"/>
</dbReference>
<dbReference type="GeneTree" id="ENSGT00940000159524"/>
<dbReference type="HOGENOM" id="CLU_015166_14_2_1"/>
<dbReference type="InParanoid" id="P55851"/>
<dbReference type="OMA" id="HARRYCS"/>
<dbReference type="OrthoDB" id="448427at2759"/>
<dbReference type="PAN-GO" id="P55851">
    <property type="GO annotations" value="4 GO annotations based on evolutionary models"/>
</dbReference>
<dbReference type="PhylomeDB" id="P55851"/>
<dbReference type="TreeFam" id="TF323211"/>
<dbReference type="PathwayCommons" id="P55851"/>
<dbReference type="Reactome" id="R-HSA-167826">
    <property type="pathway name" value="The fatty acid cycling model"/>
</dbReference>
<dbReference type="SignaLink" id="P55851"/>
<dbReference type="BioGRID-ORCS" id="7351">
    <property type="hits" value="11 hits in 1157 CRISPR screens"/>
</dbReference>
<dbReference type="ChiTaRS" id="UCP2">
    <property type="organism name" value="human"/>
</dbReference>
<dbReference type="GeneWiki" id="UCP2"/>
<dbReference type="GenomeRNAi" id="7351"/>
<dbReference type="Pharos" id="P55851">
    <property type="development level" value="Tbio"/>
</dbReference>
<dbReference type="PRO" id="PR:P55851"/>
<dbReference type="Proteomes" id="UP000005640">
    <property type="component" value="Chromosome 11"/>
</dbReference>
<dbReference type="RNAct" id="P55851">
    <property type="molecule type" value="protein"/>
</dbReference>
<dbReference type="Bgee" id="ENSG00000175567">
    <property type="expression patterns" value="Expressed in granulocyte and 203 other cell types or tissues"/>
</dbReference>
<dbReference type="ExpressionAtlas" id="P55851">
    <property type="expression patterns" value="baseline and differential"/>
</dbReference>
<dbReference type="GO" id="GO:0005743">
    <property type="term" value="C:mitochondrial inner membrane"/>
    <property type="evidence" value="ECO:0000304"/>
    <property type="project" value="Reactome"/>
</dbReference>
<dbReference type="GO" id="GO:0005739">
    <property type="term" value="C:mitochondrion"/>
    <property type="evidence" value="ECO:0000314"/>
    <property type="project" value="HPA"/>
</dbReference>
<dbReference type="GO" id="GO:0015297">
    <property type="term" value="F:antiporter activity"/>
    <property type="evidence" value="ECO:0000314"/>
    <property type="project" value="UniProtKB"/>
</dbReference>
<dbReference type="GO" id="GO:0015108">
    <property type="term" value="F:chloride transmembrane transporter activity"/>
    <property type="evidence" value="ECO:0000314"/>
    <property type="project" value="UniProtKB"/>
</dbReference>
<dbReference type="GO" id="GO:0019003">
    <property type="term" value="F:GDP binding"/>
    <property type="evidence" value="ECO:0007669"/>
    <property type="project" value="Ensembl"/>
</dbReference>
<dbReference type="GO" id="GO:0015183">
    <property type="term" value="F:L-aspartate transmembrane transporter activity"/>
    <property type="evidence" value="ECO:0000314"/>
    <property type="project" value="UniProtKB"/>
</dbReference>
<dbReference type="GO" id="GO:0015140">
    <property type="term" value="F:malate transmembrane transporter activity"/>
    <property type="evidence" value="ECO:0000314"/>
    <property type="project" value="UniProtKB"/>
</dbReference>
<dbReference type="GO" id="GO:0015131">
    <property type="term" value="F:oxaloacetate transmembrane transporter activity"/>
    <property type="evidence" value="ECO:0000314"/>
    <property type="project" value="UniProtKB"/>
</dbReference>
<dbReference type="GO" id="GO:0017077">
    <property type="term" value="F:oxidative phosphorylation uncoupler activity"/>
    <property type="evidence" value="ECO:0000318"/>
    <property type="project" value="GO_Central"/>
</dbReference>
<dbReference type="GO" id="GO:0140787">
    <property type="term" value="F:phosphate ion uniporter activity"/>
    <property type="evidence" value="ECO:0000314"/>
    <property type="project" value="UniProtKB"/>
</dbReference>
<dbReference type="GO" id="GO:0042803">
    <property type="term" value="F:protein homodimerization activity"/>
    <property type="evidence" value="ECO:0000314"/>
    <property type="project" value="UniProtKB"/>
</dbReference>
<dbReference type="GO" id="GO:0015078">
    <property type="term" value="F:proton transmembrane transporter activity"/>
    <property type="evidence" value="ECO:0000314"/>
    <property type="project" value="UniProtKB"/>
</dbReference>
<dbReference type="GO" id="GO:0008271">
    <property type="term" value="F:secondary active sulfate transmembrane transporter activity"/>
    <property type="evidence" value="ECO:0000314"/>
    <property type="project" value="UniProtKB"/>
</dbReference>
<dbReference type="GO" id="GO:1990845">
    <property type="term" value="P:adaptive thermogenesis"/>
    <property type="evidence" value="ECO:0000318"/>
    <property type="project" value="GO_Central"/>
</dbReference>
<dbReference type="GO" id="GO:0015740">
    <property type="term" value="P:C4-dicarboxylate transport"/>
    <property type="evidence" value="ECO:0000315"/>
    <property type="project" value="UniProtKB"/>
</dbReference>
<dbReference type="GO" id="GO:0034198">
    <property type="term" value="P:cellular response to amino acid starvation"/>
    <property type="evidence" value="ECO:0007669"/>
    <property type="project" value="Ensembl"/>
</dbReference>
<dbReference type="GO" id="GO:0071333">
    <property type="term" value="P:cellular response to glucose stimulus"/>
    <property type="evidence" value="ECO:0000250"/>
    <property type="project" value="UniProtKB"/>
</dbReference>
<dbReference type="GO" id="GO:0032869">
    <property type="term" value="P:cellular response to insulin stimulus"/>
    <property type="evidence" value="ECO:0007669"/>
    <property type="project" value="Ensembl"/>
</dbReference>
<dbReference type="GO" id="GO:0071284">
    <property type="term" value="P:cellular response to lead ion"/>
    <property type="evidence" value="ECO:0007669"/>
    <property type="project" value="Ensembl"/>
</dbReference>
<dbReference type="GO" id="GO:0006541">
    <property type="term" value="P:glutamine metabolic process"/>
    <property type="evidence" value="ECO:0000315"/>
    <property type="project" value="UniProtKB"/>
</dbReference>
<dbReference type="GO" id="GO:0006096">
    <property type="term" value="P:glycolytic process"/>
    <property type="evidence" value="ECO:0000315"/>
    <property type="project" value="UniProtKB"/>
</dbReference>
<dbReference type="GO" id="GO:0097421">
    <property type="term" value="P:liver regeneration"/>
    <property type="evidence" value="ECO:0007669"/>
    <property type="project" value="Ensembl"/>
</dbReference>
<dbReference type="GO" id="GO:0015909">
    <property type="term" value="P:long-chain fatty acid transport"/>
    <property type="evidence" value="ECO:0007669"/>
    <property type="project" value="Ensembl"/>
</dbReference>
<dbReference type="GO" id="GO:0030225">
    <property type="term" value="P:macrophage differentiation"/>
    <property type="evidence" value="ECO:0000250"/>
    <property type="project" value="UniProtKB"/>
</dbReference>
<dbReference type="GO" id="GO:0000266">
    <property type="term" value="P:mitochondrial fission"/>
    <property type="evidence" value="ECO:0000250"/>
    <property type="project" value="UniProtKB"/>
</dbReference>
<dbReference type="GO" id="GO:1990542">
    <property type="term" value="P:mitochondrial transmembrane transport"/>
    <property type="evidence" value="ECO:0000315"/>
    <property type="project" value="UniProtKB"/>
</dbReference>
<dbReference type="GO" id="GO:0110099">
    <property type="term" value="P:negative regulation of calcium import into the mitochondrion"/>
    <property type="evidence" value="ECO:0000314"/>
    <property type="project" value="UniProtKB"/>
</dbReference>
<dbReference type="GO" id="GO:0061179">
    <property type="term" value="P:negative regulation of insulin secretion involved in cellular response to glucose stimulus"/>
    <property type="evidence" value="ECO:0007669"/>
    <property type="project" value="Ensembl"/>
</dbReference>
<dbReference type="GO" id="GO:0043524">
    <property type="term" value="P:negative regulation of neuron apoptotic process"/>
    <property type="evidence" value="ECO:0007669"/>
    <property type="project" value="Ensembl"/>
</dbReference>
<dbReference type="GO" id="GO:0120162">
    <property type="term" value="P:positive regulation of cold-induced thermogenesis"/>
    <property type="evidence" value="ECO:0000250"/>
    <property type="project" value="YuBioLab"/>
</dbReference>
<dbReference type="GO" id="GO:1902600">
    <property type="term" value="P:proton transmembrane transport"/>
    <property type="evidence" value="ECO:0000304"/>
    <property type="project" value="ProtInc"/>
</dbReference>
<dbReference type="GO" id="GO:0072593">
    <property type="term" value="P:reactive oxygen species metabolic process"/>
    <property type="evidence" value="ECO:0000250"/>
    <property type="project" value="UniProtKB"/>
</dbReference>
<dbReference type="GO" id="GO:0051881">
    <property type="term" value="P:regulation of mitochondrial membrane potential"/>
    <property type="evidence" value="ECO:0007669"/>
    <property type="project" value="Ensembl"/>
</dbReference>
<dbReference type="GO" id="GO:0009409">
    <property type="term" value="P:response to cold"/>
    <property type="evidence" value="ECO:0000318"/>
    <property type="project" value="GO_Central"/>
</dbReference>
<dbReference type="GO" id="GO:0071548">
    <property type="term" value="P:response to dexamethasone"/>
    <property type="evidence" value="ECO:0007669"/>
    <property type="project" value="Ensembl"/>
</dbReference>
<dbReference type="GO" id="GO:0070542">
    <property type="term" value="P:response to fatty acid"/>
    <property type="evidence" value="ECO:0007669"/>
    <property type="project" value="Ensembl"/>
</dbReference>
<dbReference type="GO" id="GO:0001666">
    <property type="term" value="P:response to hypoxia"/>
    <property type="evidence" value="ECO:0000314"/>
    <property type="project" value="CACAO"/>
</dbReference>
<dbReference type="GO" id="GO:0000303">
    <property type="term" value="P:response to superoxide"/>
    <property type="evidence" value="ECO:0007669"/>
    <property type="project" value="Ensembl"/>
</dbReference>
<dbReference type="FunFam" id="1.50.40.10:FF:000008">
    <property type="entry name" value="Mitochondrial uncoupling protein 2"/>
    <property type="match status" value="1"/>
</dbReference>
<dbReference type="Gene3D" id="1.50.40.10">
    <property type="entry name" value="Mitochondrial carrier domain"/>
    <property type="match status" value="1"/>
</dbReference>
<dbReference type="InterPro" id="IPR002067">
    <property type="entry name" value="Mit_carrier"/>
</dbReference>
<dbReference type="InterPro" id="IPR050391">
    <property type="entry name" value="Mito_Metabolite_Transporter"/>
</dbReference>
<dbReference type="InterPro" id="IPR018108">
    <property type="entry name" value="Mitochondrial_sb/sol_carrier"/>
</dbReference>
<dbReference type="InterPro" id="IPR023395">
    <property type="entry name" value="Mt_carrier_dom_sf"/>
</dbReference>
<dbReference type="PANTHER" id="PTHR45618">
    <property type="entry name" value="MITOCHONDRIAL DICARBOXYLATE CARRIER-RELATED"/>
    <property type="match status" value="1"/>
</dbReference>
<dbReference type="Pfam" id="PF00153">
    <property type="entry name" value="Mito_carr"/>
    <property type="match status" value="3"/>
</dbReference>
<dbReference type="PRINTS" id="PR00784">
    <property type="entry name" value="MTUNCOUPLING"/>
</dbReference>
<dbReference type="SUPFAM" id="SSF103506">
    <property type="entry name" value="Mitochondrial carrier"/>
    <property type="match status" value="1"/>
</dbReference>
<dbReference type="PROSITE" id="PS50920">
    <property type="entry name" value="SOLCAR"/>
    <property type="match status" value="3"/>
</dbReference>
<accession>P55851</accession>
<accession>Q4PJH8</accession>
<accession>Q53HM3</accession>
<gene>
    <name type="primary">UCP2</name>
    <name evidence="15" type="synonym">SLC25A8</name>
</gene>
<protein>
    <recommendedName>
        <fullName evidence="17">Dicarboxylate carrier SLC25A8</fullName>
    </recommendedName>
    <alternativeName>
        <fullName>Mitochondrial uncoupling protein 2</fullName>
        <shortName>UCP 2</shortName>
    </alternativeName>
    <alternativeName>
        <fullName>Solute carrier family 25 member 8</fullName>
    </alternativeName>
    <alternativeName>
        <fullName>UCPH</fullName>
    </alternativeName>
</protein>
<evidence type="ECO:0000250" key="1">
    <source>
        <dbReference type="UniProtKB" id="P70406"/>
    </source>
</evidence>
<evidence type="ECO:0000255" key="2"/>
<evidence type="ECO:0000255" key="3">
    <source>
        <dbReference type="PROSITE-ProRule" id="PRU00282"/>
    </source>
</evidence>
<evidence type="ECO:0000269" key="4">
    <source>
    </source>
</evidence>
<evidence type="ECO:0000269" key="5">
    <source>
    </source>
</evidence>
<evidence type="ECO:0000269" key="6">
    <source>
    </source>
</evidence>
<evidence type="ECO:0000269" key="7">
    <source>
    </source>
</evidence>
<evidence type="ECO:0000269" key="8">
    <source>
    </source>
</evidence>
<evidence type="ECO:0000269" key="9">
    <source>
    </source>
</evidence>
<evidence type="ECO:0000269" key="10">
    <source>
    </source>
</evidence>
<evidence type="ECO:0000269" key="11">
    <source>
    </source>
</evidence>
<evidence type="ECO:0000269" key="12">
    <source ref="4"/>
</evidence>
<evidence type="ECO:0000269" key="13">
    <source ref="7"/>
</evidence>
<evidence type="ECO:0000269" key="14">
    <source ref="8"/>
</evidence>
<evidence type="ECO:0000303" key="15">
    <source>
    </source>
</evidence>
<evidence type="ECO:0000305" key="16"/>
<evidence type="ECO:0000305" key="17">
    <source>
    </source>
</evidence>
<comment type="function">
    <text evidence="1 4 5 7 9">Antiporter that exports dicarboxylate intermediates of the Krebs cycle in exchange for phosphate plus a proton across the inner membrane of mitochondria, a process driven by mitochondrial motive force with an overall impact on glycolysis, glutaminolysis and glutathione-dependent redox balance. Continuous export of oxaloacetate and related four-carbon dicarboxylates from mitochondrial matrix into the cytosol negatively regulates the oxidation of acetyl-CoA substrates via the Krebs cycle, lowering the ATP/ADP ratio and reactive oxygen species (ROS) production (PubMed:24395786). May mediate inducible proton entry into the mitochondrial matrix affecting ATP turnover as a protection mechanism against oxidative stress. The proton currents are most likely associated with fatty acid flipping across the inner membrane of mitochondria in a metabolic process regulated by free fatty acids and purine nucleotides (By similarity) (PubMed:11171965, PubMed:11278935, PubMed:22524567, PubMed:26182433, PubMed:33373220). Regulates the use of glucose as a source of energy. Required for glucose-induced DRP1-dependent mitochondrial fission and neuron activation in the ventromedial nucleus of the hypothalamus (VMH). This mitochondrial adaptation mechanism modulates the VMH pool of glucose-excited neurons with an impact on systemic glucose homeostasis (By similarity). Regulates ROS levels and metabolic reprogramming of macrophages during the resolution phase of inflammation. Attenuates ROS production in response to IL33 to preserve the integrity of the Krebs cycle required for persistent production of itaconate and subsequent GATA3-dependent differentiation of inflammation-resolving alternatively activated macrophages (By similarity). Can unidirectionally transport anions including L-malate, L-aspartate, phosphate and chloride ions (PubMed:22524567, PubMed:24395786, PubMed:26182433). Does not mediate adaptive thermogenesis (By similarity).</text>
</comment>
<comment type="catalytic activity">
    <reaction evidence="7">
        <text>L-aspartate(out) + phosphate(in) + H(+)(in) = L-aspartate(in) + phosphate(out) + H(+)(out)</text>
        <dbReference type="Rhea" id="RHEA:73307"/>
        <dbReference type="ChEBI" id="CHEBI:15378"/>
        <dbReference type="ChEBI" id="CHEBI:29991"/>
        <dbReference type="ChEBI" id="CHEBI:43474"/>
    </reaction>
</comment>
<comment type="catalytic activity">
    <reaction evidence="7">
        <text>oxaloacetate(out) + phosphate(in) + H(+)(in) = oxaloacetate(in) + phosphate(out) + H(+)(out)</text>
        <dbReference type="Rhea" id="RHEA:73303"/>
        <dbReference type="ChEBI" id="CHEBI:15378"/>
        <dbReference type="ChEBI" id="CHEBI:16452"/>
        <dbReference type="ChEBI" id="CHEBI:43474"/>
    </reaction>
</comment>
<comment type="catalytic activity">
    <reaction evidence="7">
        <text>(S)-malate(out) + phosphate(in) + H(+)(in) = (S)-malate(in) + phosphate(out) + H(+)(out)</text>
        <dbReference type="Rhea" id="RHEA:73299"/>
        <dbReference type="ChEBI" id="CHEBI:15378"/>
        <dbReference type="ChEBI" id="CHEBI:15589"/>
        <dbReference type="ChEBI" id="CHEBI:43474"/>
    </reaction>
</comment>
<comment type="catalytic activity">
    <reaction evidence="7">
        <text>malonate(out) + phosphate(in) + H(+)(in) = malonate(in) + phosphate(out) + H(+)(out)</text>
        <dbReference type="Rhea" id="RHEA:73387"/>
        <dbReference type="ChEBI" id="CHEBI:15378"/>
        <dbReference type="ChEBI" id="CHEBI:15792"/>
        <dbReference type="ChEBI" id="CHEBI:43474"/>
    </reaction>
</comment>
<comment type="catalytic activity">
    <reaction evidence="7">
        <text>sulfate(out) + phosphate(in) + H(+)(in) = sulfate(in) + phosphate(out) + H(+)(out)</text>
        <dbReference type="Rhea" id="RHEA:73391"/>
        <dbReference type="ChEBI" id="CHEBI:15378"/>
        <dbReference type="ChEBI" id="CHEBI:16189"/>
        <dbReference type="ChEBI" id="CHEBI:43474"/>
    </reaction>
</comment>
<comment type="catalytic activity">
    <reaction evidence="7">
        <text>(S)-malate(out) = (S)-malate(in)</text>
        <dbReference type="Rhea" id="RHEA:74555"/>
        <dbReference type="ChEBI" id="CHEBI:15589"/>
    </reaction>
</comment>
<comment type="catalytic activity">
    <reaction evidence="7">
        <text>L-aspartate(out) = L-aspartate(in)</text>
        <dbReference type="Rhea" id="RHEA:66332"/>
        <dbReference type="ChEBI" id="CHEBI:29991"/>
    </reaction>
</comment>
<comment type="catalytic activity">
    <reaction evidence="7">
        <text>phosphate(in) = phosphate(out)</text>
        <dbReference type="Rhea" id="RHEA:32823"/>
        <dbReference type="ChEBI" id="CHEBI:43474"/>
    </reaction>
</comment>
<comment type="catalytic activity">
    <reaction evidence="6 8">
        <text>chloride(in) = chloride(out)</text>
        <dbReference type="Rhea" id="RHEA:29823"/>
        <dbReference type="ChEBI" id="CHEBI:17996"/>
    </reaction>
</comment>
<comment type="catalytic activity">
    <reaction evidence="4 6 8 9">
        <text>H(+)(in) = H(+)(out)</text>
        <dbReference type="Rhea" id="RHEA:34979"/>
        <dbReference type="ChEBI" id="CHEBI:15378"/>
    </reaction>
</comment>
<comment type="catalytic activity">
    <reaction evidence="1">
        <text>a long-chain fatty acid(out) = a long-chain fatty acid(in)</text>
        <dbReference type="Rhea" id="RHEA:39283"/>
        <dbReference type="ChEBI" id="CHEBI:57560"/>
    </reaction>
</comment>
<comment type="activity regulation">
    <text evidence="6 7 8">Inhibited by pyridoxal- 5'-phosphate, bathophenanthroline, tannic acid, bromocresol purple, butylmalonate and phenylsuccinate (PubMed:24395786). Proton conductance is activated by cardiolipin and long-chain free fatty acids and inhibited by purine nucleotides ATP and ADP. Chloride ion transporter activity is inhibited by long-chain free fatty acids (PubMed:22524567, PubMed:26182433).</text>
</comment>
<comment type="subunit">
    <text evidence="8 9">Homotetramer. Adopts an asymmetrical dimer of dimers functional form.</text>
</comment>
<comment type="interaction">
    <interactant intactId="EBI-2842077">
        <id>P55851</id>
    </interactant>
    <interactant intactId="EBI-10172290">
        <id>P60409</id>
        <label>KRTAP10-7</label>
    </interactant>
    <organismsDiffer>false</organismsDiffer>
    <experiments>3</experiments>
</comment>
<comment type="subcellular location">
    <subcellularLocation>
        <location evidence="1">Mitochondrion inner membrane</location>
        <topology evidence="2">Multi-pass membrane protein</topology>
    </subcellularLocation>
</comment>
<comment type="tissue specificity">
    <text evidence="10">Widely expressed in adult human tissues, including tissues rich in macrophages. Most expressed in white adipose tissue and skeletal muscle.</text>
</comment>
<comment type="domain">
    <text evidence="1">The GDP-binding domain is located within the hydrophilic cavity, with GDP phosphates likely forming salt bridges with the charged residues, Lys-141 and Arg-185.</text>
</comment>
<comment type="domain">
    <text evidence="1">The long-chain fatty acid-binding domain consists of an hydrophobic groove between peripheral transmembrane helices 1 and 6 near the matrix side.</text>
</comment>
<comment type="polymorphism">
    <text>Genetic variations in UCP2 define the body mass index quantitative trait locus 4 (BMIQ4) [MIM:607447]. A common polymorphism in the promoter of UCP2 has been shown to be associated with a decreased risk of obesity in middle-aged individuals.</text>
</comment>
<comment type="similarity">
    <text evidence="16">Belongs to the mitochondrial carrier (TC 2.A.29) family.</text>
</comment>
<comment type="caution">
    <text evidence="4 5 15">The role of UCP2/SLC25A8 in mitochondrial proton conductance is a matter of debate. It was initially suggested that it mediates proton leak that increases net proton conductance in response to ROS such as reactive alkenals generated during fatty acid oxidation in mitochondria. By lowering the proton motive force, it would provide for feedback control of mitochondrial ROS metabolism limiting extensive ROS production and protecting cells against oxidative stress. This activity and its potential regulation by ubiquinones and nucleotides was disputed by later studies, which failed to reproduce the effect on proton conductance under physiological conditions. Rather than 'uncoupling' the link between electron transfer and ATP synthesis, it may couple metabolite transport to proton flux to allow for optimal ATP turnover.</text>
</comment>
<feature type="chain" id="PRO_0000090664" description="Dicarboxylate carrier SLC25A8">
    <location>
        <begin position="1"/>
        <end position="309"/>
    </location>
</feature>
<feature type="topological domain" description="Mitochondrial intermembrane" evidence="16">
    <location>
        <begin position="1"/>
        <end position="16"/>
    </location>
</feature>
<feature type="transmembrane region" description="Helical; Name=1" evidence="1">
    <location>
        <begin position="17"/>
        <end position="40"/>
    </location>
</feature>
<feature type="topological domain" description="Mitochondrial matrix" evidence="16">
    <location>
        <begin position="41"/>
        <end position="77"/>
    </location>
</feature>
<feature type="transmembrane region" description="Helical; Name=2" evidence="1">
    <location>
        <begin position="78"/>
        <end position="103"/>
    </location>
</feature>
<feature type="topological domain" description="Mitochondrial intermembrane" evidence="16">
    <location>
        <begin position="104"/>
        <end position="119"/>
    </location>
</feature>
<feature type="transmembrane region" description="Helical; Name=3" evidence="1">
    <location>
        <begin position="120"/>
        <end position="145"/>
    </location>
</feature>
<feature type="topological domain" description="Mitochondrial matrix" evidence="16">
    <location>
        <begin position="146"/>
        <end position="173"/>
    </location>
</feature>
<feature type="transmembrane region" description="Helical; Name=4" evidence="1">
    <location>
        <begin position="174"/>
        <end position="199"/>
    </location>
</feature>
<feature type="topological domain" description="Mitochondrial intermembrane" evidence="16">
    <location>
        <begin position="200"/>
        <end position="217"/>
    </location>
</feature>
<feature type="transmembrane region" description="Helical; Name=5" evidence="1">
    <location>
        <begin position="218"/>
        <end position="242"/>
    </location>
</feature>
<feature type="topological domain" description="Mitochondrial matrix" evidence="16">
    <location>
        <begin position="243"/>
        <end position="268"/>
    </location>
</feature>
<feature type="transmembrane region" description="Helical; Name=6" evidence="1">
    <location>
        <begin position="269"/>
        <end position="294"/>
    </location>
</feature>
<feature type="topological domain" description="Mitochondrial intermembrane" evidence="16">
    <location>
        <begin position="295"/>
        <end position="309"/>
    </location>
</feature>
<feature type="repeat" description="Solcar 1" evidence="3">
    <location>
        <begin position="11"/>
        <end position="106"/>
    </location>
</feature>
<feature type="repeat" description="Solcar 2" evidence="3">
    <location>
        <begin position="114"/>
        <end position="203"/>
    </location>
</feature>
<feature type="repeat" description="Solcar 3" evidence="3">
    <location>
        <begin position="212"/>
        <end position="297"/>
    </location>
</feature>
<feature type="region of interest" description="Important for interaction with long-chain fatty acids" evidence="1">
    <location>
        <begin position="16"/>
        <end position="63"/>
    </location>
</feature>
<feature type="region of interest" description="Important for interaction with long-chain fatty acids" evidence="1">
    <location>
        <begin position="278"/>
        <end position="285"/>
    </location>
</feature>
<feature type="site" description="Important for inhibition by GDP" evidence="1">
    <location>
        <position position="141"/>
    </location>
</feature>
<feature type="site" description="Important for inhibition by GDP" evidence="1">
    <location>
        <position position="185"/>
    </location>
</feature>
<feature type="sequence variant" id="VAR_016129" description="In dbSNP:rs660339." evidence="11 12 13 14">
    <original>A</original>
    <variation>V</variation>
    <location>
        <position position="55"/>
    </location>
</feature>
<feature type="sequence variant" id="VAR_023998" description="In dbSNP:rs45541732." evidence="14">
    <original>R</original>
    <variation>Q</variation>
    <location>
        <position position="76"/>
    </location>
</feature>
<feature type="sequence variant" id="VAR_023999" description="In dbSNP:rs45486692." evidence="14">
    <original>R</original>
    <variation>Q</variation>
    <location>
        <position position="154"/>
    </location>
</feature>
<feature type="sequence variant" id="VAR_024000" description="Found in a patient with congenital hyperinsulinism; markedly decreases transporter activity; dbSNP:rs45490393." evidence="7 14">
    <original>A</original>
    <variation>G</variation>
    <location>
        <position position="268"/>
    </location>
</feature>
<feature type="sequence variant" id="VAR_024001" description="In dbSNP:rs45596837." evidence="14">
    <original>S</original>
    <variation>C</variation>
    <location>
        <position position="282"/>
    </location>
</feature>
<feature type="sequence conflict" description="In Ref. 2; AAB48411." evidence="16" ref="2">
    <original>T</original>
    <variation>I</variation>
    <location>
        <position position="219"/>
    </location>
</feature>
<organism>
    <name type="scientific">Homo sapiens</name>
    <name type="common">Human</name>
    <dbReference type="NCBI Taxonomy" id="9606"/>
    <lineage>
        <taxon>Eukaryota</taxon>
        <taxon>Metazoa</taxon>
        <taxon>Chordata</taxon>
        <taxon>Craniata</taxon>
        <taxon>Vertebrata</taxon>
        <taxon>Euteleostomi</taxon>
        <taxon>Mammalia</taxon>
        <taxon>Eutheria</taxon>
        <taxon>Euarchontoglires</taxon>
        <taxon>Primates</taxon>
        <taxon>Haplorrhini</taxon>
        <taxon>Catarrhini</taxon>
        <taxon>Hominidae</taxon>
        <taxon>Homo</taxon>
    </lineage>
</organism>
<reference key="1">
    <citation type="journal article" date="1997" name="FEBS Lett.">
        <title>Uncoupling protein-3: a new member of the mitochondrial carrier family with tissue-specific expression.</title>
        <authorList>
            <person name="Boss O."/>
            <person name="Samec S."/>
            <person name="Paoloni-Giacobino A."/>
            <person name="Dulloo A."/>
            <person name="Seydoux J."/>
            <person name="Rossier C."/>
            <person name="Muzzin P."/>
            <person name="Giacobino J.-P."/>
        </authorList>
    </citation>
    <scope>NUCLEOTIDE SEQUENCE [MRNA]</scope>
    <source>
        <tissue>Skeletal muscle</tissue>
    </source>
</reference>
<reference key="2">
    <citation type="journal article" date="1997" name="Nat. Genet.">
        <title>Uncoupling protein-2: a novel gene linked to obesity and hyperinsulinemia.</title>
        <authorList>
            <person name="Fleury C."/>
            <person name="Neverova M."/>
            <person name="Collins S."/>
            <person name="Raimbault S."/>
            <person name="Champigny O."/>
            <person name="Levi-Meyrueis C."/>
            <person name="Bouillaud F."/>
            <person name="Seldin M.F."/>
            <person name="Surwit R.S."/>
            <person name="Ricquier D."/>
            <person name="Warden C.H."/>
        </authorList>
    </citation>
    <scope>NUCLEOTIDE SEQUENCE [MRNA]</scope>
    <scope>TISSUE SPECIFICITY</scope>
    <source>
        <tissue>Lung</tissue>
        <tissue>Skeletal muscle</tissue>
    </source>
</reference>
<reference key="3">
    <citation type="journal article" date="1997" name="Diabetes">
        <title>Cloning and characterization of an uncoupling protein homolog: a potential molecular mediator of human thermogenesis.</title>
        <authorList>
            <person name="Gimeno R.E."/>
            <person name="Dembski M."/>
            <person name="Weng X."/>
            <person name="Deng N."/>
            <person name="Shyjan A.W."/>
            <person name="Gimeno C.J."/>
            <person name="Iris F."/>
            <person name="Ellis S.J."/>
            <person name="Woolf E.A."/>
            <person name="Tartaglia L.A."/>
        </authorList>
    </citation>
    <scope>NUCLEOTIDE SEQUENCE [MRNA]</scope>
    <scope>VARIANT VAL-55</scope>
    <source>
        <tissue>Spleen</tissue>
    </source>
</reference>
<reference key="4">
    <citation type="submission" date="1998-01" db="EMBL/GenBank/DDBJ databases">
        <authorList>
            <person name="Klannemark M."/>
            <person name="Orho M."/>
            <person name="Groop L."/>
        </authorList>
    </citation>
    <scope>NUCLEOTIDE SEQUENCE [GENOMIC DNA]</scope>
    <scope>VARIANT VAL-55</scope>
</reference>
<reference key="5">
    <citation type="journal article" date="1998" name="Diabetes">
        <title>Structure and organization of the human uncoupling protein 2 gene and identification of a common biallelic variant in Caucasian and African-American subjects.</title>
        <authorList>
            <person name="Argyropoulos G."/>
            <person name="Brown A.M."/>
            <person name="Peterson R."/>
            <person name="Likes C.E."/>
            <person name="Watson D.K."/>
            <person name="Garvey W.T."/>
        </authorList>
    </citation>
    <scope>NUCLEOTIDE SEQUENCE [GENOMIC DNA]</scope>
</reference>
<reference key="6">
    <citation type="journal article" date="1999" name="Biochem. Biophys. Res. Commun.">
        <title>Functional organization of the human uncoupling protein-2 gene, and juxtaposition to the uncoupling protein-3 gene.</title>
        <authorList>
            <person name="Pecqueur C."/>
            <person name="Cassard-Doulcier A.M."/>
            <person name="Raimbault S."/>
            <person name="Miroux B."/>
            <person name="Fleury C."/>
            <person name="Gelly C."/>
            <person name="Bouillaud F."/>
            <person name="Ricquier D."/>
        </authorList>
    </citation>
    <scope>NUCLEOTIDE SEQUENCE [GENOMIC DNA]</scope>
    <source>
        <tissue>Placenta</tissue>
    </source>
</reference>
<reference key="7">
    <citation type="submission" date="2005-04" db="EMBL/GenBank/DDBJ databases">
        <authorList>
            <person name="Suzuki Y."/>
            <person name="Sugano S."/>
            <person name="Totoki Y."/>
            <person name="Toyoda A."/>
            <person name="Takeda T."/>
            <person name="Sakaki Y."/>
            <person name="Tanaka A."/>
            <person name="Yokoyama S."/>
        </authorList>
    </citation>
    <scope>NUCLEOTIDE SEQUENCE [LARGE SCALE MRNA]</scope>
    <scope>VARIANT VAL-55</scope>
    <source>
        <tissue>Adipose tissue</tissue>
    </source>
</reference>
<reference key="8">
    <citation type="submission" date="2005-06" db="EMBL/GenBank/DDBJ databases">
        <authorList>
            <consortium name="NIEHS SNPs program"/>
        </authorList>
    </citation>
    <scope>NUCLEOTIDE SEQUENCE [GENOMIC DNA]</scope>
    <scope>VARIANTS VAL-55; GLN-76; GLN-154; GLY-268 AND CYS-282</scope>
</reference>
<reference key="9">
    <citation type="journal article" date="2004" name="Genome Res.">
        <title>The status, quality, and expansion of the NIH full-length cDNA project: the Mammalian Gene Collection (MGC).</title>
        <authorList>
            <consortium name="The MGC Project Team"/>
        </authorList>
    </citation>
    <scope>NUCLEOTIDE SEQUENCE [LARGE SCALE MRNA]</scope>
    <source>
        <tissue>B-cell</tissue>
    </source>
</reference>
<reference key="10">
    <citation type="journal article" date="2001" name="Proc. Natl. Acad. Sci. U.S.A.">
        <title>Uncoupling proteins 2 and 3 are highly active H(+) transporters and highly nucleotide sensitive when activated by coenzyme Q (ubiquinone).</title>
        <authorList>
            <person name="Echtay K.S."/>
            <person name="Winkler E."/>
            <person name="Frischmuth K."/>
            <person name="Klingenberg M."/>
        </authorList>
    </citation>
    <scope>FUNCTION</scope>
    <scope>TRANSPORT ACTIVITY</scope>
    <scope>CAUTION</scope>
</reference>
<reference key="11">
    <citation type="journal article" date="2001" name="J. Biol. Chem.">
        <title>Physiological levels of mammalian uncoupling protein 2 do not uncouple yeast mitochondria.</title>
        <authorList>
            <person name="Stuart J.A."/>
            <person name="Harper J.A."/>
            <person name="Brindle K.M."/>
            <person name="Jekabsons M.B."/>
            <person name="Brand M.D."/>
        </authorList>
    </citation>
    <scope>FUNCTION</scope>
    <scope>CAUTION</scope>
</reference>
<reference key="12">
    <citation type="journal article" date="2012" name="Biochemistry">
        <title>Toward understanding the mechanism of ion transport activity of neuronal uncoupling proteins UCP2, UCP4, and UCP5.</title>
        <authorList>
            <person name="Hoang T."/>
            <person name="Smith M.D."/>
            <person name="Jelokhani-Niaraki M."/>
        </authorList>
    </citation>
    <scope>FUNCTION</scope>
    <scope>TRANSPORTER ACTIVITY</scope>
    <scope>ACTIVITY REGULATION</scope>
</reference>
<reference key="13">
    <citation type="journal article" date="2014" name="Proc. Natl. Acad. Sci. U.S.A.">
        <title>UCP2 transports C4 metabolites out of mitochondria, regulating glucose and glutamine oxidation.</title>
        <authorList>
            <person name="Vozza A."/>
            <person name="Parisi G."/>
            <person name="De Leonardis F."/>
            <person name="Lasorsa F.M."/>
            <person name="Castegna A."/>
            <person name="Amorese D."/>
            <person name="Marmo R."/>
            <person name="Calcagnile V.M."/>
            <person name="Palmieri L."/>
            <person name="Ricquier D."/>
            <person name="Paradies E."/>
            <person name="Scarcia P."/>
            <person name="Palmieri F."/>
            <person name="Bouillaud F."/>
            <person name="Fiermonte G."/>
        </authorList>
    </citation>
    <scope>FUNCTION</scope>
    <scope>TRANSPORT ACTIVITY</scope>
    <scope>ACTIVITY REGULATION</scope>
    <scope>CHARACTERIZATION OF VARIANT GLY-268</scope>
</reference>
<reference key="14">
    <citation type="journal article" date="2015" name="Biosci. Rep.">
        <title>A biophysical study on molecular physiology of the uncoupling proteins of the central nervous system.</title>
        <authorList>
            <person name="Hoang T."/>
            <person name="Kuljanin M."/>
            <person name="Smith M.D."/>
            <person name="Jelokhani-Niaraki M."/>
        </authorList>
    </citation>
    <scope>FUNCTION</scope>
    <scope>TRANSPORTER ACTIVITY</scope>
    <scope>ACTIVITY REGULATION</scope>
    <scope>SUBUNIT</scope>
</reference>
<reference key="15">
    <citation type="journal article" date="2021" name="Biochim. Biophys. Acta">
        <title>Mitochondrial proton leaks and uncoupling proteins.</title>
        <authorList>
            <person name="Nicholls D.G."/>
        </authorList>
    </citation>
    <scope>REVIEW</scope>
    <scope>CAUTION</scope>
</reference>
<reference key="16">
    <citation type="journal article" date="2021" name="J. Phys. Chem. B">
        <title>Functional Oligomeric Forms of Uncoupling Protein 2: Strong Evidence for Asymmetry in Protein and Lipid Bilayer Systems.</title>
        <authorList>
            <person name="Ardalan A."/>
            <person name="Sowlati-Hashjin S."/>
            <person name="Uwumarenogie S.O."/>
            <person name="Fish M."/>
            <person name="Mitchell J."/>
            <person name="Karttunen M."/>
            <person name="Smith M.D."/>
            <person name="Jelokhani-Niaraki M."/>
        </authorList>
    </citation>
    <scope>FUNCTION</scope>
    <scope>TRANSPORT ACTIVITY</scope>
    <scope>SUBUNIT</scope>
</reference>
<reference key="17">
    <citation type="journal article" date="2001" name="Nat. Genet.">
        <title>A common polymorphism in the promoter of UCP2 is associated with decreased risk of obesity in middle-aged humans.</title>
        <authorList>
            <person name="Esterbauer H."/>
            <person name="Schneitler C."/>
            <person name="Oberkofler H."/>
            <person name="Ebenbichler C."/>
            <person name="Paulweber B."/>
            <person name="Sandhofer F."/>
            <person name="Ladurner G."/>
            <person name="Hell E."/>
            <person name="Strosberg A.D."/>
            <person name="Patsch J.R."/>
            <person name="Krempler F."/>
            <person name="Patsch W."/>
        </authorList>
    </citation>
    <scope>INVOLVEMENT IN BMIQ4 AND SUSCEPTIBILITY TO OBESITY</scope>
</reference>